<comment type="function">
    <text evidence="1">Catalyzes the synthesis of alpha-ribazole-5'-phosphate from nicotinate mononucleotide (NAMN) and 5,6-dimethylbenzimidazole (DMB).</text>
</comment>
<comment type="catalytic activity">
    <reaction evidence="1">
        <text>5,6-dimethylbenzimidazole + nicotinate beta-D-ribonucleotide = alpha-ribazole 5'-phosphate + nicotinate + H(+)</text>
        <dbReference type="Rhea" id="RHEA:11196"/>
        <dbReference type="ChEBI" id="CHEBI:15378"/>
        <dbReference type="ChEBI" id="CHEBI:15890"/>
        <dbReference type="ChEBI" id="CHEBI:32544"/>
        <dbReference type="ChEBI" id="CHEBI:57502"/>
        <dbReference type="ChEBI" id="CHEBI:57918"/>
        <dbReference type="EC" id="2.4.2.21"/>
    </reaction>
</comment>
<comment type="pathway">
    <text evidence="1">Nucleoside biosynthesis; alpha-ribazole biosynthesis; alpha-ribazole from 5,6-dimethylbenzimidazole: step 1/2.</text>
</comment>
<comment type="similarity">
    <text evidence="1">Belongs to the CobT family.</text>
</comment>
<reference key="1">
    <citation type="journal article" date="2003" name="Proc. Natl. Acad. Sci. U.S.A.">
        <title>The genome sequence of Clostridium tetani, the causative agent of tetanus disease.</title>
        <authorList>
            <person name="Brueggemann H."/>
            <person name="Baeumer S."/>
            <person name="Fricke W.F."/>
            <person name="Wiezer A."/>
            <person name="Liesegang H."/>
            <person name="Decker I."/>
            <person name="Herzberg C."/>
            <person name="Martinez-Arias R."/>
            <person name="Merkl R."/>
            <person name="Henne A."/>
            <person name="Gottschalk G."/>
        </authorList>
    </citation>
    <scope>NUCLEOTIDE SEQUENCE [LARGE SCALE GENOMIC DNA]</scope>
    <source>
        <strain>Massachusetts / E88</strain>
    </source>
</reference>
<sequence>MVIIMKLLEETLRRIKPADEEVIKKAWSRMDSLSKPIGSLGKLEEIAVQISGITGKVKNEINKKMTVIMCSDNGICEEGVSACPQELTALLAENYVKEITGIGVLSKHVNADMCVVDIGIKSDVKDSRILNKKVAYGTKNMAKEPAMTREEAVKAIETGIELVDKFVKEGYDLFGTGEAGIGNTATSAAVISVLSQIDSDKIVGKGSGLTDEGFLNKKRAVKQAIEINKPNKEDVIDVIAKIGGFDIAGICGCFLGAAKNRVPIVIDGIISASAALCAYKMNANVKDFLISSHLSAEPGIEYVTGAIGLKPCLHMEMRLGEGSGCPLQFFMIESALCLMNNMATLAEASIVDSEFLVDIREK</sequence>
<keyword id="KW-0169">Cobalamin biosynthesis</keyword>
<keyword id="KW-0328">Glycosyltransferase</keyword>
<keyword id="KW-1185">Reference proteome</keyword>
<keyword id="KW-0808">Transferase</keyword>
<name>COBT_CLOTE</name>
<accession>Q891S7</accession>
<proteinExistence type="inferred from homology"/>
<evidence type="ECO:0000255" key="1">
    <source>
        <dbReference type="HAMAP-Rule" id="MF_00230"/>
    </source>
</evidence>
<dbReference type="EC" id="2.4.2.21" evidence="1"/>
<dbReference type="EMBL" id="AE015927">
    <property type="protein sequence ID" value="AAO36768.1"/>
    <property type="molecule type" value="Genomic_DNA"/>
</dbReference>
<dbReference type="SMR" id="Q891S7"/>
<dbReference type="STRING" id="212717.CTC_02290"/>
<dbReference type="KEGG" id="ctc:CTC_02290"/>
<dbReference type="HOGENOM" id="CLU_002982_0_0_9"/>
<dbReference type="UniPathway" id="UPA00061">
    <property type="reaction ID" value="UER00516"/>
</dbReference>
<dbReference type="Proteomes" id="UP000001412">
    <property type="component" value="Chromosome"/>
</dbReference>
<dbReference type="GO" id="GO:0008939">
    <property type="term" value="F:nicotinate-nucleotide-dimethylbenzimidazole phosphoribosyltransferase activity"/>
    <property type="evidence" value="ECO:0007669"/>
    <property type="project" value="UniProtKB-UniRule"/>
</dbReference>
<dbReference type="GO" id="GO:0009236">
    <property type="term" value="P:cobalamin biosynthetic process"/>
    <property type="evidence" value="ECO:0007669"/>
    <property type="project" value="UniProtKB-KW"/>
</dbReference>
<dbReference type="CDD" id="cd02439">
    <property type="entry name" value="DMB-PRT_CobT"/>
    <property type="match status" value="1"/>
</dbReference>
<dbReference type="FunFam" id="3.40.50.10210:FF:000001">
    <property type="entry name" value="Nicotinate-nucleotide--dimethylbenzimidazole phosphoribosyltransferase"/>
    <property type="match status" value="1"/>
</dbReference>
<dbReference type="Gene3D" id="1.10.1610.10">
    <property type="match status" value="1"/>
</dbReference>
<dbReference type="Gene3D" id="3.40.50.10210">
    <property type="match status" value="1"/>
</dbReference>
<dbReference type="HAMAP" id="MF_00230">
    <property type="entry name" value="CobT"/>
    <property type="match status" value="1"/>
</dbReference>
<dbReference type="InterPro" id="IPR003200">
    <property type="entry name" value="Nict_dMeBzImd_PRibTrfase"/>
</dbReference>
<dbReference type="InterPro" id="IPR017846">
    <property type="entry name" value="Nict_dMeBzImd_PRibTrfase_bact"/>
</dbReference>
<dbReference type="InterPro" id="IPR023195">
    <property type="entry name" value="Nict_dMeBzImd_PRibTrfase_N"/>
</dbReference>
<dbReference type="InterPro" id="IPR036087">
    <property type="entry name" value="Nict_dMeBzImd_PRibTrfase_sf"/>
</dbReference>
<dbReference type="NCBIfam" id="TIGR03160">
    <property type="entry name" value="cobT_DBIPRT"/>
    <property type="match status" value="1"/>
</dbReference>
<dbReference type="NCBIfam" id="NF000996">
    <property type="entry name" value="PRK00105.1"/>
    <property type="match status" value="1"/>
</dbReference>
<dbReference type="PANTHER" id="PTHR43463">
    <property type="entry name" value="NICOTINATE-NUCLEOTIDE--DIMETHYLBENZIMIDAZOLE PHOSPHORIBOSYLTRANSFERASE"/>
    <property type="match status" value="1"/>
</dbReference>
<dbReference type="PANTHER" id="PTHR43463:SF1">
    <property type="entry name" value="NICOTINATE-NUCLEOTIDE--DIMETHYLBENZIMIDAZOLE PHOSPHORIBOSYLTRANSFERASE"/>
    <property type="match status" value="1"/>
</dbReference>
<dbReference type="Pfam" id="PF02277">
    <property type="entry name" value="DBI_PRT"/>
    <property type="match status" value="1"/>
</dbReference>
<dbReference type="SUPFAM" id="SSF52733">
    <property type="entry name" value="Nicotinate mononucleotide:5,6-dimethylbenzimidazole phosphoribosyltransferase (CobT)"/>
    <property type="match status" value="1"/>
</dbReference>
<gene>
    <name evidence="1" type="primary">cobT</name>
    <name type="ordered locus">CTC_02290</name>
</gene>
<feature type="chain" id="PRO_0000167044" description="Nicotinate-nucleotide--dimethylbenzimidazole phosphoribosyltransferase">
    <location>
        <begin position="1"/>
        <end position="362"/>
    </location>
</feature>
<feature type="active site" description="Proton acceptor" evidence="1">
    <location>
        <position position="321"/>
    </location>
</feature>
<protein>
    <recommendedName>
        <fullName evidence="1">Nicotinate-nucleotide--dimethylbenzimidazole phosphoribosyltransferase</fullName>
        <shortName evidence="1">NN:DBI PRT</shortName>
        <ecNumber evidence="1">2.4.2.21</ecNumber>
    </recommendedName>
    <alternativeName>
        <fullName evidence="1">N(1)-alpha-phosphoribosyltransferase</fullName>
    </alternativeName>
</protein>
<organism>
    <name type="scientific">Clostridium tetani (strain Massachusetts / E88)</name>
    <dbReference type="NCBI Taxonomy" id="212717"/>
    <lineage>
        <taxon>Bacteria</taxon>
        <taxon>Bacillati</taxon>
        <taxon>Bacillota</taxon>
        <taxon>Clostridia</taxon>
        <taxon>Eubacteriales</taxon>
        <taxon>Clostridiaceae</taxon>
        <taxon>Clostridium</taxon>
    </lineage>
</organism>